<evidence type="ECO:0000255" key="1">
    <source>
        <dbReference type="HAMAP-Rule" id="MF_00664"/>
    </source>
</evidence>
<protein>
    <recommendedName>
        <fullName evidence="1">Phosphatidylserine decarboxylase proenzyme</fullName>
        <ecNumber evidence="1">4.1.1.65</ecNumber>
    </recommendedName>
    <component>
        <recommendedName>
            <fullName evidence="1">Phosphatidylserine decarboxylase alpha chain</fullName>
        </recommendedName>
    </component>
    <component>
        <recommendedName>
            <fullName evidence="1">Phosphatidylserine decarboxylase beta chain</fullName>
        </recommendedName>
    </component>
</protein>
<name>PSD_BRUA4</name>
<proteinExistence type="inferred from homology"/>
<keyword id="KW-1003">Cell membrane</keyword>
<keyword id="KW-0210">Decarboxylase</keyword>
<keyword id="KW-0444">Lipid biosynthesis</keyword>
<keyword id="KW-0443">Lipid metabolism</keyword>
<keyword id="KW-0456">Lyase</keyword>
<keyword id="KW-0472">Membrane</keyword>
<keyword id="KW-0594">Phospholipid biosynthesis</keyword>
<keyword id="KW-1208">Phospholipid metabolism</keyword>
<keyword id="KW-0670">Pyruvate</keyword>
<keyword id="KW-1185">Reference proteome</keyword>
<keyword id="KW-0865">Zymogen</keyword>
<dbReference type="EC" id="4.1.1.65" evidence="1"/>
<dbReference type="EMBL" id="CP000758">
    <property type="protein sequence ID" value="ABS13287.1"/>
    <property type="molecule type" value="Genomic_DNA"/>
</dbReference>
<dbReference type="RefSeq" id="WP_012090826.1">
    <property type="nucleotide sequence ID" value="NC_009667.1"/>
</dbReference>
<dbReference type="STRING" id="439375.Oant_0556"/>
<dbReference type="KEGG" id="oan:Oant_0556"/>
<dbReference type="eggNOG" id="COG0688">
    <property type="taxonomic scope" value="Bacteria"/>
</dbReference>
<dbReference type="HOGENOM" id="CLU_072492_0_0_5"/>
<dbReference type="PhylomeDB" id="A6WWD3"/>
<dbReference type="UniPathway" id="UPA00558">
    <property type="reaction ID" value="UER00616"/>
</dbReference>
<dbReference type="Proteomes" id="UP000002301">
    <property type="component" value="Chromosome 1"/>
</dbReference>
<dbReference type="GO" id="GO:0005886">
    <property type="term" value="C:plasma membrane"/>
    <property type="evidence" value="ECO:0007669"/>
    <property type="project" value="UniProtKB-SubCell"/>
</dbReference>
<dbReference type="GO" id="GO:0004609">
    <property type="term" value="F:phosphatidylserine decarboxylase activity"/>
    <property type="evidence" value="ECO:0007669"/>
    <property type="project" value="UniProtKB-UniRule"/>
</dbReference>
<dbReference type="GO" id="GO:0006646">
    <property type="term" value="P:phosphatidylethanolamine biosynthetic process"/>
    <property type="evidence" value="ECO:0007669"/>
    <property type="project" value="UniProtKB-UniRule"/>
</dbReference>
<dbReference type="HAMAP" id="MF_00664">
    <property type="entry name" value="PS_decarb_PSD_A"/>
    <property type="match status" value="1"/>
</dbReference>
<dbReference type="InterPro" id="IPR003817">
    <property type="entry name" value="PS_Dcarbxylase"/>
</dbReference>
<dbReference type="InterPro" id="IPR033175">
    <property type="entry name" value="PSD-A"/>
</dbReference>
<dbReference type="NCBIfam" id="NF003677">
    <property type="entry name" value="PRK05305.1-1"/>
    <property type="match status" value="1"/>
</dbReference>
<dbReference type="NCBIfam" id="NF003678">
    <property type="entry name" value="PRK05305.1-2"/>
    <property type="match status" value="1"/>
</dbReference>
<dbReference type="NCBIfam" id="NF003679">
    <property type="entry name" value="PRK05305.1-3"/>
    <property type="match status" value="1"/>
</dbReference>
<dbReference type="NCBIfam" id="NF003685">
    <property type="entry name" value="PRK05305.2-5"/>
    <property type="match status" value="1"/>
</dbReference>
<dbReference type="PANTHER" id="PTHR35809">
    <property type="entry name" value="ARCHAETIDYLSERINE DECARBOXYLASE PROENZYME-RELATED"/>
    <property type="match status" value="1"/>
</dbReference>
<dbReference type="PANTHER" id="PTHR35809:SF1">
    <property type="entry name" value="ARCHAETIDYLSERINE DECARBOXYLASE PROENZYME-RELATED"/>
    <property type="match status" value="1"/>
</dbReference>
<dbReference type="Pfam" id="PF02666">
    <property type="entry name" value="PS_Dcarbxylase"/>
    <property type="match status" value="1"/>
</dbReference>
<accession>A6WWD3</accession>
<sequence>MSLTDTIRNTFVPIHREGYPFIAGFFVVSLILGWLWDPLFWIGMVLTVWCIYFYRDPERVTPMDDDLVISPADGKVSFVGPAVPPAELDLGAEPRMRVSVFMNVFSVHINRSPVRGKIEKVVHRPGKFLNAELDKASTENERNSVLIESPHGKIGVVQIAGLVARRIVCWSNEDDDLSVGERFGLIRFGSRVDVYLPADATVRVAVGQTAVAGETVLADYGSVRGEPVVRIG</sequence>
<comment type="function">
    <text evidence="1">Catalyzes the formation of phosphatidylethanolamine (PtdEtn) from phosphatidylserine (PtdSer).</text>
</comment>
<comment type="catalytic activity">
    <reaction evidence="1">
        <text>a 1,2-diacyl-sn-glycero-3-phospho-L-serine + H(+) = a 1,2-diacyl-sn-glycero-3-phosphoethanolamine + CO2</text>
        <dbReference type="Rhea" id="RHEA:20828"/>
        <dbReference type="ChEBI" id="CHEBI:15378"/>
        <dbReference type="ChEBI" id="CHEBI:16526"/>
        <dbReference type="ChEBI" id="CHEBI:57262"/>
        <dbReference type="ChEBI" id="CHEBI:64612"/>
        <dbReference type="EC" id="4.1.1.65"/>
    </reaction>
</comment>
<comment type="cofactor">
    <cofactor evidence="1">
        <name>pyruvate</name>
        <dbReference type="ChEBI" id="CHEBI:15361"/>
    </cofactor>
    <text evidence="1">Binds 1 pyruvoyl group covalently per subunit.</text>
</comment>
<comment type="pathway">
    <text evidence="1">Phospholipid metabolism; phosphatidylethanolamine biosynthesis; phosphatidylethanolamine from CDP-diacylglycerol: step 2/2.</text>
</comment>
<comment type="subunit">
    <text evidence="1">Heterodimer of a large membrane-associated beta subunit and a small pyruvoyl-containing alpha subunit.</text>
</comment>
<comment type="subcellular location">
    <subcellularLocation>
        <location evidence="1">Cell membrane</location>
        <topology evidence="1">Peripheral membrane protein</topology>
    </subcellularLocation>
</comment>
<comment type="PTM">
    <text evidence="1">Is synthesized initially as an inactive proenzyme. Formation of the active enzyme involves a self-maturation process in which the active site pyruvoyl group is generated from an internal serine residue via an autocatalytic post-translational modification. Two non-identical subunits are generated from the proenzyme in this reaction, and the pyruvate is formed at the N-terminus of the alpha chain, which is derived from the carboxyl end of the proenzyme. The post-translation cleavage follows an unusual pathway, termed non-hydrolytic serinolysis, in which the side chain hydroxyl group of the serine supplies its oxygen atom to form the C-terminus of the beta chain, while the remainder of the serine residue undergoes an oxidative deamination to produce ammonia and the pyruvoyl prosthetic group on the alpha chain.</text>
</comment>
<comment type="similarity">
    <text evidence="1">Belongs to the phosphatidylserine decarboxylase family. PSD-A subfamily.</text>
</comment>
<gene>
    <name evidence="1" type="primary">psd</name>
    <name type="ordered locus">Oant_0556</name>
</gene>
<organism>
    <name type="scientific">Brucella anthropi (strain ATCC 49188 / DSM 6882 / CCUG 24695 / JCM 21032 / LMG 3331 / NBRC 15819 / NCTC 12168 / Alc 37)</name>
    <name type="common">Ochrobactrum anthropi</name>
    <dbReference type="NCBI Taxonomy" id="439375"/>
    <lineage>
        <taxon>Bacteria</taxon>
        <taxon>Pseudomonadati</taxon>
        <taxon>Pseudomonadota</taxon>
        <taxon>Alphaproteobacteria</taxon>
        <taxon>Hyphomicrobiales</taxon>
        <taxon>Brucellaceae</taxon>
        <taxon>Brucella/Ochrobactrum group</taxon>
        <taxon>Brucella</taxon>
    </lineage>
</organism>
<feature type="chain" id="PRO_1000026670" description="Phosphatidylserine decarboxylase beta chain" evidence="1">
    <location>
        <begin position="1"/>
        <end position="189"/>
    </location>
</feature>
<feature type="chain" id="PRO_1000026671" description="Phosphatidylserine decarboxylase alpha chain" evidence="1">
    <location>
        <begin position="190"/>
        <end position="232"/>
    </location>
</feature>
<feature type="active site" description="Schiff-base intermediate with substrate; via pyruvic acid" evidence="1">
    <location>
        <position position="190"/>
    </location>
</feature>
<feature type="site" description="Cleavage (non-hydrolytic); by autocatalysis" evidence="1">
    <location>
        <begin position="189"/>
        <end position="190"/>
    </location>
</feature>
<feature type="modified residue" description="Pyruvic acid (Ser); by autocatalysis" evidence="1">
    <location>
        <position position="190"/>
    </location>
</feature>
<reference key="1">
    <citation type="journal article" date="2011" name="J. Bacteriol.">
        <title>Genome of Ochrobactrum anthropi ATCC 49188 T, a versatile opportunistic pathogen and symbiont of several eukaryotic hosts.</title>
        <authorList>
            <person name="Chain P.S."/>
            <person name="Lang D.M."/>
            <person name="Comerci D.J."/>
            <person name="Malfatti S.A."/>
            <person name="Vergez L.M."/>
            <person name="Shin M."/>
            <person name="Ugalde R.A."/>
            <person name="Garcia E."/>
            <person name="Tolmasky M.E."/>
        </authorList>
    </citation>
    <scope>NUCLEOTIDE SEQUENCE [LARGE SCALE GENOMIC DNA]</scope>
    <source>
        <strain>ATCC 49188 / DSM 6882 / CCUG 24695 / JCM 21032 / LMG 3331 / NBRC 15819 / NCTC 12168 / Alc 37</strain>
    </source>
</reference>